<sequence length="345" mass="38371">MSTELQNTIENNDIRESQMWNSKELKEAIKEIEKMFGKGSIMVLGQSDNLNIETFSSGSLLLDNALGIGGYPKGRIIEIYGPESSGKTTLSLHAICEVQKLGGIAAFIDAEHSLEPKYCQTLGIDTNKLLVSQPDNGEQALDILEMLINSNSIDLIVVDSVAALVPKTELDGEMSDQSIGLQARMMSKALRKLNWLIAKSNTTVIFINQLREKIGVIFGNPETTTGGKALKFFSSIRLEVRKAENILNNYEIIGNKIKIKVVKNKTAIPFKTTTISLLYNKGIDKLGELVDLLVSYEIIEKSGVWYSYQNEKIGQGRTSVIQWLNADENRINELTEQVKKLIKQD</sequence>
<organism>
    <name type="scientific">Mycoplasma mycoides</name>
    <dbReference type="NCBI Taxonomy" id="2102"/>
    <lineage>
        <taxon>Bacteria</taxon>
        <taxon>Bacillati</taxon>
        <taxon>Mycoplasmatota</taxon>
        <taxon>Mollicutes</taxon>
        <taxon>Mycoplasmataceae</taxon>
        <taxon>Mycoplasma</taxon>
    </lineage>
</organism>
<accession>P42446</accession>
<protein>
    <recommendedName>
        <fullName evidence="1">Protein RecA</fullName>
    </recommendedName>
    <alternativeName>
        <fullName evidence="1">Recombinase A</fullName>
    </alternativeName>
</protein>
<name>RECA_MYCMY</name>
<dbReference type="EMBL" id="L22073">
    <property type="protein sequence ID" value="AAA20405.1"/>
    <property type="molecule type" value="Genomic_DNA"/>
</dbReference>
<dbReference type="SMR" id="P42446"/>
<dbReference type="GO" id="GO:0005829">
    <property type="term" value="C:cytosol"/>
    <property type="evidence" value="ECO:0007669"/>
    <property type="project" value="TreeGrafter"/>
</dbReference>
<dbReference type="GO" id="GO:0005524">
    <property type="term" value="F:ATP binding"/>
    <property type="evidence" value="ECO:0007669"/>
    <property type="project" value="UniProtKB-UniRule"/>
</dbReference>
<dbReference type="GO" id="GO:0016887">
    <property type="term" value="F:ATP hydrolysis activity"/>
    <property type="evidence" value="ECO:0007669"/>
    <property type="project" value="InterPro"/>
</dbReference>
<dbReference type="GO" id="GO:0140664">
    <property type="term" value="F:ATP-dependent DNA damage sensor activity"/>
    <property type="evidence" value="ECO:0007669"/>
    <property type="project" value="InterPro"/>
</dbReference>
<dbReference type="GO" id="GO:0003684">
    <property type="term" value="F:damaged DNA binding"/>
    <property type="evidence" value="ECO:0007669"/>
    <property type="project" value="UniProtKB-UniRule"/>
</dbReference>
<dbReference type="GO" id="GO:0003697">
    <property type="term" value="F:single-stranded DNA binding"/>
    <property type="evidence" value="ECO:0007669"/>
    <property type="project" value="UniProtKB-UniRule"/>
</dbReference>
<dbReference type="GO" id="GO:0006310">
    <property type="term" value="P:DNA recombination"/>
    <property type="evidence" value="ECO:0007669"/>
    <property type="project" value="UniProtKB-UniRule"/>
</dbReference>
<dbReference type="GO" id="GO:0006281">
    <property type="term" value="P:DNA repair"/>
    <property type="evidence" value="ECO:0007669"/>
    <property type="project" value="UniProtKB-UniRule"/>
</dbReference>
<dbReference type="GO" id="GO:0009432">
    <property type="term" value="P:SOS response"/>
    <property type="evidence" value="ECO:0007669"/>
    <property type="project" value="UniProtKB-UniRule"/>
</dbReference>
<dbReference type="CDD" id="cd00983">
    <property type="entry name" value="RecA"/>
    <property type="match status" value="1"/>
</dbReference>
<dbReference type="FunFam" id="3.40.50.300:FF:000087">
    <property type="entry name" value="Recombinase RecA"/>
    <property type="match status" value="1"/>
</dbReference>
<dbReference type="Gene3D" id="3.40.50.300">
    <property type="entry name" value="P-loop containing nucleotide triphosphate hydrolases"/>
    <property type="match status" value="1"/>
</dbReference>
<dbReference type="HAMAP" id="MF_00268">
    <property type="entry name" value="RecA"/>
    <property type="match status" value="1"/>
</dbReference>
<dbReference type="InterPro" id="IPR003593">
    <property type="entry name" value="AAA+_ATPase"/>
</dbReference>
<dbReference type="InterPro" id="IPR013765">
    <property type="entry name" value="DNA_recomb/repair_RecA"/>
</dbReference>
<dbReference type="InterPro" id="IPR020584">
    <property type="entry name" value="DNA_recomb/repair_RecA_CS"/>
</dbReference>
<dbReference type="InterPro" id="IPR027417">
    <property type="entry name" value="P-loop_NTPase"/>
</dbReference>
<dbReference type="InterPro" id="IPR049261">
    <property type="entry name" value="RecA-like_C"/>
</dbReference>
<dbReference type="InterPro" id="IPR049428">
    <property type="entry name" value="RecA-like_N"/>
</dbReference>
<dbReference type="InterPro" id="IPR020588">
    <property type="entry name" value="RecA_ATP-bd"/>
</dbReference>
<dbReference type="InterPro" id="IPR023400">
    <property type="entry name" value="RecA_C_sf"/>
</dbReference>
<dbReference type="InterPro" id="IPR020587">
    <property type="entry name" value="RecA_monomer-monomer_interface"/>
</dbReference>
<dbReference type="NCBIfam" id="TIGR02012">
    <property type="entry name" value="tigrfam_recA"/>
    <property type="match status" value="1"/>
</dbReference>
<dbReference type="PANTHER" id="PTHR45900:SF1">
    <property type="entry name" value="MITOCHONDRIAL DNA REPAIR PROTEIN RECA HOMOLOG-RELATED"/>
    <property type="match status" value="1"/>
</dbReference>
<dbReference type="PANTHER" id="PTHR45900">
    <property type="entry name" value="RECA"/>
    <property type="match status" value="1"/>
</dbReference>
<dbReference type="Pfam" id="PF00154">
    <property type="entry name" value="RecA"/>
    <property type="match status" value="1"/>
</dbReference>
<dbReference type="Pfam" id="PF21096">
    <property type="entry name" value="RecA_C"/>
    <property type="match status" value="1"/>
</dbReference>
<dbReference type="PRINTS" id="PR00142">
    <property type="entry name" value="RECA"/>
</dbReference>
<dbReference type="SMART" id="SM00382">
    <property type="entry name" value="AAA"/>
    <property type="match status" value="1"/>
</dbReference>
<dbReference type="SUPFAM" id="SSF52540">
    <property type="entry name" value="P-loop containing nucleoside triphosphate hydrolases"/>
    <property type="match status" value="1"/>
</dbReference>
<dbReference type="SUPFAM" id="SSF54752">
    <property type="entry name" value="RecA protein, C-terminal domain"/>
    <property type="match status" value="1"/>
</dbReference>
<dbReference type="PROSITE" id="PS00321">
    <property type="entry name" value="RECA_1"/>
    <property type="match status" value="1"/>
</dbReference>
<dbReference type="PROSITE" id="PS50162">
    <property type="entry name" value="RECA_2"/>
    <property type="match status" value="1"/>
</dbReference>
<dbReference type="PROSITE" id="PS50163">
    <property type="entry name" value="RECA_3"/>
    <property type="match status" value="1"/>
</dbReference>
<comment type="function">
    <text evidence="1">Can catalyze the hydrolysis of ATP in the presence of single-stranded DNA, the ATP-dependent uptake of single-stranded DNA by duplex DNA, and the ATP-dependent hybridization of homologous single-stranded DNAs. It interacts with LexA causing its activation and leading to its autocatalytic cleavage.</text>
</comment>
<comment type="subcellular location">
    <subcellularLocation>
        <location evidence="1">Cytoplasm</location>
    </subcellularLocation>
</comment>
<comment type="similarity">
    <text evidence="1">Belongs to the RecA family.</text>
</comment>
<proteinExistence type="inferred from homology"/>
<gene>
    <name evidence="1" type="primary">recA</name>
</gene>
<evidence type="ECO:0000255" key="1">
    <source>
        <dbReference type="HAMAP-Rule" id="MF_00268"/>
    </source>
</evidence>
<feature type="chain" id="PRO_0000122762" description="Protein RecA">
    <location>
        <begin position="1"/>
        <end position="345"/>
    </location>
</feature>
<feature type="binding site" evidence="1">
    <location>
        <begin position="81"/>
        <end position="88"/>
    </location>
    <ligand>
        <name>ATP</name>
        <dbReference type="ChEBI" id="CHEBI:30616"/>
    </ligand>
</feature>
<reference key="1">
    <citation type="journal article" date="1994" name="Gene">
        <title>Cloning and characterization of the recA genes from Mycoplasma pulmonis and M. mycoides subsp. mycoides.</title>
        <authorList>
            <person name="King K.W."/>
            <person name="Woodard A."/>
            <person name="Dybvig K."/>
        </authorList>
    </citation>
    <scope>NUCLEOTIDE SEQUENCE [GENOMIC DNA]</scope>
    <source>
        <strain>GM9</strain>
    </source>
</reference>
<keyword id="KW-0067">ATP-binding</keyword>
<keyword id="KW-0963">Cytoplasm</keyword>
<keyword id="KW-0227">DNA damage</keyword>
<keyword id="KW-0233">DNA recombination</keyword>
<keyword id="KW-0234">DNA repair</keyword>
<keyword id="KW-0238">DNA-binding</keyword>
<keyword id="KW-0547">Nucleotide-binding</keyword>
<keyword id="KW-0742">SOS response</keyword>